<protein>
    <recommendedName>
        <fullName evidence="1">O-succinylhomoserine sulfhydrylase</fullName>
        <shortName evidence="1">OSH sulfhydrylase</shortName>
        <shortName evidence="1">OSHS sulfhydrylase</shortName>
        <ecNumber evidence="1">2.5.1.-</ecNumber>
    </recommendedName>
</protein>
<dbReference type="EC" id="2.5.1.-" evidence="1"/>
<dbReference type="EMBL" id="AE000516">
    <property type="protein sequence ID" value="AAK44624.1"/>
    <property type="molecule type" value="Genomic_DNA"/>
</dbReference>
<dbReference type="PIR" id="F70632">
    <property type="entry name" value="F70632"/>
</dbReference>
<dbReference type="RefSeq" id="WP_003401927.1">
    <property type="nucleotide sequence ID" value="NZ_KK341227.1"/>
</dbReference>
<dbReference type="SMR" id="P9WGB4"/>
<dbReference type="KEGG" id="mtc:MT0402"/>
<dbReference type="PATRIC" id="fig|83331.31.peg.430"/>
<dbReference type="HOGENOM" id="CLU_018986_2_0_11"/>
<dbReference type="UniPathway" id="UPA00051">
    <property type="reaction ID" value="UER00449"/>
</dbReference>
<dbReference type="Proteomes" id="UP000001020">
    <property type="component" value="Chromosome"/>
</dbReference>
<dbReference type="GO" id="GO:0005737">
    <property type="term" value="C:cytoplasm"/>
    <property type="evidence" value="ECO:0007669"/>
    <property type="project" value="TreeGrafter"/>
</dbReference>
<dbReference type="GO" id="GO:0016846">
    <property type="term" value="F:carbon-sulfur lyase activity"/>
    <property type="evidence" value="ECO:0007669"/>
    <property type="project" value="TreeGrafter"/>
</dbReference>
<dbReference type="GO" id="GO:0030170">
    <property type="term" value="F:pyridoxal phosphate binding"/>
    <property type="evidence" value="ECO:0007669"/>
    <property type="project" value="UniProtKB-UniRule"/>
</dbReference>
<dbReference type="GO" id="GO:0016765">
    <property type="term" value="F:transferase activity, transferring alkyl or aryl (other than methyl) groups"/>
    <property type="evidence" value="ECO:0007669"/>
    <property type="project" value="UniProtKB-UniRule"/>
</dbReference>
<dbReference type="GO" id="GO:0071266">
    <property type="term" value="P:'de novo' L-methionine biosynthetic process"/>
    <property type="evidence" value="ECO:0007669"/>
    <property type="project" value="UniProtKB-UniRule"/>
</dbReference>
<dbReference type="GO" id="GO:0071268">
    <property type="term" value="P:homocysteine biosynthetic process"/>
    <property type="evidence" value="ECO:0007669"/>
    <property type="project" value="InterPro"/>
</dbReference>
<dbReference type="GO" id="GO:0019346">
    <property type="term" value="P:transsulfuration"/>
    <property type="evidence" value="ECO:0007669"/>
    <property type="project" value="InterPro"/>
</dbReference>
<dbReference type="CDD" id="cd00614">
    <property type="entry name" value="CGS_like"/>
    <property type="match status" value="1"/>
</dbReference>
<dbReference type="FunFam" id="3.90.1150.10:FF:000033">
    <property type="entry name" value="Cystathionine gamma-synthase"/>
    <property type="match status" value="1"/>
</dbReference>
<dbReference type="FunFam" id="3.40.640.10:FF:000035">
    <property type="entry name" value="O-succinylhomoserine sulfhydrylase"/>
    <property type="match status" value="1"/>
</dbReference>
<dbReference type="Gene3D" id="3.90.1150.10">
    <property type="entry name" value="Aspartate Aminotransferase, domain 1"/>
    <property type="match status" value="1"/>
</dbReference>
<dbReference type="Gene3D" id="3.40.640.10">
    <property type="entry name" value="Type I PLP-dependent aspartate aminotransferase-like (Major domain)"/>
    <property type="match status" value="1"/>
</dbReference>
<dbReference type="HAMAP" id="MF_02056">
    <property type="entry name" value="MetZ"/>
    <property type="match status" value="1"/>
</dbReference>
<dbReference type="InterPro" id="IPR000277">
    <property type="entry name" value="Cys/Met-Metab_PyrdxlP-dep_enz"/>
</dbReference>
<dbReference type="InterPro" id="IPR006234">
    <property type="entry name" value="O-succ-hSer_sulfhydrylase"/>
</dbReference>
<dbReference type="InterPro" id="IPR015424">
    <property type="entry name" value="PyrdxlP-dep_Trfase"/>
</dbReference>
<dbReference type="InterPro" id="IPR015421">
    <property type="entry name" value="PyrdxlP-dep_Trfase_major"/>
</dbReference>
<dbReference type="InterPro" id="IPR015422">
    <property type="entry name" value="PyrdxlP-dep_Trfase_small"/>
</dbReference>
<dbReference type="NCBIfam" id="TIGR01325">
    <property type="entry name" value="O_suc_HS_sulf"/>
    <property type="match status" value="1"/>
</dbReference>
<dbReference type="NCBIfam" id="NF005870">
    <property type="entry name" value="PRK07810.1"/>
    <property type="match status" value="1"/>
</dbReference>
<dbReference type="PANTHER" id="PTHR11808:SF80">
    <property type="entry name" value="CYSTATHIONINE GAMMA-LYASE"/>
    <property type="match status" value="1"/>
</dbReference>
<dbReference type="PANTHER" id="PTHR11808">
    <property type="entry name" value="TRANS-SULFURATION ENZYME FAMILY MEMBER"/>
    <property type="match status" value="1"/>
</dbReference>
<dbReference type="Pfam" id="PF01053">
    <property type="entry name" value="Cys_Met_Meta_PP"/>
    <property type="match status" value="1"/>
</dbReference>
<dbReference type="PIRSF" id="PIRSF001434">
    <property type="entry name" value="CGS"/>
    <property type="match status" value="1"/>
</dbReference>
<dbReference type="SUPFAM" id="SSF53383">
    <property type="entry name" value="PLP-dependent transferases"/>
    <property type="match status" value="1"/>
</dbReference>
<reference key="1">
    <citation type="journal article" date="2002" name="J. Bacteriol.">
        <title>Whole-genome comparison of Mycobacterium tuberculosis clinical and laboratory strains.</title>
        <authorList>
            <person name="Fleischmann R.D."/>
            <person name="Alland D."/>
            <person name="Eisen J.A."/>
            <person name="Carpenter L."/>
            <person name="White O."/>
            <person name="Peterson J.D."/>
            <person name="DeBoy R.T."/>
            <person name="Dodson R.J."/>
            <person name="Gwinn M.L."/>
            <person name="Haft D.H."/>
            <person name="Hickey E.K."/>
            <person name="Kolonay J.F."/>
            <person name="Nelson W.C."/>
            <person name="Umayam L.A."/>
            <person name="Ermolaeva M.D."/>
            <person name="Salzberg S.L."/>
            <person name="Delcher A."/>
            <person name="Utterback T.R."/>
            <person name="Weidman J.F."/>
            <person name="Khouri H.M."/>
            <person name="Gill J."/>
            <person name="Mikula A."/>
            <person name="Bishai W."/>
            <person name="Jacobs W.R. Jr."/>
            <person name="Venter J.C."/>
            <person name="Fraser C.M."/>
        </authorList>
    </citation>
    <scope>NUCLEOTIDE SEQUENCE [LARGE SCALE GENOMIC DNA]</scope>
    <source>
        <strain>CDC 1551 / Oshkosh</strain>
    </source>
</reference>
<keyword id="KW-0028">Amino-acid biosynthesis</keyword>
<keyword id="KW-0486">Methionine biosynthesis</keyword>
<keyword id="KW-0663">Pyridoxal phosphate</keyword>
<keyword id="KW-1185">Reference proteome</keyword>
<keyword id="KW-0808">Transferase</keyword>
<name>METZ_MYCTO</name>
<feature type="chain" id="PRO_0000428391" description="O-succinylhomoserine sulfhydrylase">
    <location>
        <begin position="1"/>
        <end position="406"/>
    </location>
</feature>
<feature type="modified residue" description="N6-(pyridoxal phosphate)lysine" evidence="1">
    <location>
        <position position="219"/>
    </location>
</feature>
<organism>
    <name type="scientific">Mycobacterium tuberculosis (strain CDC 1551 / Oshkosh)</name>
    <dbReference type="NCBI Taxonomy" id="83331"/>
    <lineage>
        <taxon>Bacteria</taxon>
        <taxon>Bacillati</taxon>
        <taxon>Actinomycetota</taxon>
        <taxon>Actinomycetes</taxon>
        <taxon>Mycobacteriales</taxon>
        <taxon>Mycobacteriaceae</taxon>
        <taxon>Mycobacterium</taxon>
        <taxon>Mycobacterium tuberculosis complex</taxon>
    </lineage>
</organism>
<comment type="function">
    <text evidence="1">Catalyzes the formation of L-homocysteine from O-succinyl-L-homoserine (OSHS) and hydrogen sulfide.</text>
</comment>
<comment type="catalytic activity">
    <reaction evidence="1">
        <text>O-succinyl-L-homoserine + hydrogen sulfide = L-homocysteine + succinate</text>
        <dbReference type="Rhea" id="RHEA:27826"/>
        <dbReference type="ChEBI" id="CHEBI:29919"/>
        <dbReference type="ChEBI" id="CHEBI:30031"/>
        <dbReference type="ChEBI" id="CHEBI:57661"/>
        <dbReference type="ChEBI" id="CHEBI:58199"/>
    </reaction>
</comment>
<comment type="cofactor">
    <cofactor evidence="1">
        <name>pyridoxal 5'-phosphate</name>
        <dbReference type="ChEBI" id="CHEBI:597326"/>
    </cofactor>
</comment>
<comment type="pathway">
    <text evidence="1">Amino-acid biosynthesis; L-methionine biosynthesis via de novo pathway; L-homocysteine from O-succinyl-L-homoserine: step 1/1.</text>
</comment>
<comment type="subunit">
    <text evidence="1">Homotetramer.</text>
</comment>
<comment type="similarity">
    <text evidence="1">Belongs to the trans-sulfuration enzymes family. MetZ subfamily.</text>
</comment>
<accession>P9WGB4</accession>
<accession>L0T3J4</accession>
<accession>P95199</accession>
<accession>Q7D9W7</accession>
<gene>
    <name evidence="1" type="primary">metZ</name>
    <name type="ordered locus">MT0402</name>
</gene>
<sequence length="406" mass="43345">MTDESSVRTPKALPDGVSQATVGVRGGMLRSGFEETAEAMYLTSGYVYGSAAVAEKSFAGELDHYVYSRYGNPTVSVFEERLRLIEGAPAAFATASGMAAVFTSLGALLGAGDRLVAARSLFGSCFVVCSEILPRWGVQTVFVDGDDLSQWERALSVPTQAVFFETPSNPMQSLVDIAAVTELAHAAGAKVVLDNVFATPLLQQGFPLGVDVVVYSGTKHIDGQGRVLGGAILGDREYIDGPVQKLMRHTGPAMSAFNAWVLLKGLETLAIRVQHSNASAQRIAEFLNGHPSVRWVRYPYLPSHPQYDLAKRQMSGGGTVVTFALDCPEDVAKQRAFEVLDKMRLIDISNNLGDAKSLVTHPATTTHRAMGPEGRAAIGLGDGVVRISVGLEDTDDLIADIDRALS</sequence>
<proteinExistence type="inferred from homology"/>
<evidence type="ECO:0000255" key="1">
    <source>
        <dbReference type="HAMAP-Rule" id="MF_02056"/>
    </source>
</evidence>